<sequence>MDMVSLAWAALMVVFTFSLSLVVWGRSGL</sequence>
<comment type="function">
    <text evidence="1">Component of the cytochrome b6-f complex, which mediates electron transfer between photosystem II (PSII) and photosystem I (PSI), cyclic electron flow around PSI, and state transitions.</text>
</comment>
<comment type="subunit">
    <text evidence="1">The 4 large subunits of the cytochrome b6-f complex are cytochrome b6, subunit IV (17 kDa polypeptide, PetD), cytochrome f and the Rieske protein, while the 4 small subunits are PetG, PetL, PetM and PetN. The complex functions as a dimer.</text>
</comment>
<comment type="subcellular location">
    <subcellularLocation>
        <location>Plastid</location>
        <location>Chloroplast thylakoid membrane</location>
        <topology>Single-pass membrane protein</topology>
    </subcellularLocation>
</comment>
<comment type="similarity">
    <text evidence="1">Belongs to the PetN family.</text>
</comment>
<comment type="sequence caution" evidence="2">
    <conflict type="erroneous initiation">
        <sequence resource="EMBL-CDS" id="ABI98738"/>
    </conflict>
</comment>
<gene>
    <name evidence="1" type="primary">petN</name>
    <name type="ordered locus">CsCp020</name>
</gene>
<protein>
    <recommendedName>
        <fullName evidence="1">Cytochrome b6-f complex subunit 8</fullName>
    </recommendedName>
    <alternativeName>
        <fullName evidence="1">Cytochrome b6-f complex subunit PetN</fullName>
    </alternativeName>
    <alternativeName>
        <fullName evidence="1">Cytochrome b6-f complex subunit VIII</fullName>
    </alternativeName>
</protein>
<geneLocation type="chloroplast"/>
<organism>
    <name type="scientific">Cucumis sativus</name>
    <name type="common">Cucumber</name>
    <dbReference type="NCBI Taxonomy" id="3659"/>
    <lineage>
        <taxon>Eukaryota</taxon>
        <taxon>Viridiplantae</taxon>
        <taxon>Streptophyta</taxon>
        <taxon>Embryophyta</taxon>
        <taxon>Tracheophyta</taxon>
        <taxon>Spermatophyta</taxon>
        <taxon>Magnoliopsida</taxon>
        <taxon>eudicotyledons</taxon>
        <taxon>Gunneridae</taxon>
        <taxon>Pentapetalae</taxon>
        <taxon>rosids</taxon>
        <taxon>fabids</taxon>
        <taxon>Cucurbitales</taxon>
        <taxon>Cucurbitaceae</taxon>
        <taxon>Benincaseae</taxon>
        <taxon>Cucumis</taxon>
    </lineage>
</organism>
<reference key="1">
    <citation type="journal article" date="2006" name="Plant Cell Rep.">
        <title>Complete sequence and organization of the cucumber (Cucumis sativus L. cv. Baekmibaekdadagi) chloroplast genome.</title>
        <authorList>
            <person name="Kim J.-S."/>
            <person name="Jung J.D."/>
            <person name="Lee J.-A."/>
            <person name="Park H.-W."/>
            <person name="Oh K.-H."/>
            <person name="Jeong W.J."/>
            <person name="Choi D.-W."/>
            <person name="Liu J.R."/>
            <person name="Cho K.Y."/>
        </authorList>
    </citation>
    <scope>NUCLEOTIDE SEQUENCE [LARGE SCALE GENOMIC DNA]</scope>
    <source>
        <strain>cv. Baekmibaekdadagi</strain>
    </source>
</reference>
<reference key="2">
    <citation type="journal article" date="2007" name="Cell. Mol. Biol. Lett.">
        <title>The complete structure of the cucumber (Cucumis sativus L.) chloroplast genome: its composition and comparative analysis.</title>
        <authorList>
            <person name="Plader W.W."/>
            <person name="Yukawa Y."/>
            <person name="Sugiura M."/>
            <person name="Malepszy S."/>
        </authorList>
    </citation>
    <scope>NUCLEOTIDE SEQUENCE [LARGE SCALE GENOMIC DNA]</scope>
    <source>
        <strain>cv. Borszczagowski</strain>
    </source>
</reference>
<reference key="3">
    <citation type="journal article" date="2007" name="Genome">
        <title>Sequencing cucumber (Cucumis sativus L.) chloroplast genomes identifies differences between chilling-tolerant and -susceptible cucumber lines.</title>
        <authorList>
            <person name="Chung S.-M."/>
            <person name="Gordon V.S."/>
            <person name="Staub J.E."/>
        </authorList>
    </citation>
    <scope>NUCLEOTIDE SEQUENCE [LARGE SCALE GENOMIC DNA]</scope>
    <source>
        <strain>cv. Chipper</strain>
        <strain>cv. Gy14</strain>
    </source>
</reference>
<dbReference type="EMBL" id="DQ119058">
    <property type="protein sequence ID" value="AAZ94644.1"/>
    <property type="molecule type" value="Genomic_DNA"/>
</dbReference>
<dbReference type="EMBL" id="AJ970307">
    <property type="protein sequence ID" value="CAJ00751.1"/>
    <property type="molecule type" value="Genomic_DNA"/>
</dbReference>
<dbReference type="EMBL" id="DQ865975">
    <property type="protein sequence ID" value="ABI97410.1"/>
    <property type="molecule type" value="Genomic_DNA"/>
</dbReference>
<dbReference type="EMBL" id="DQ865976">
    <property type="protein sequence ID" value="ABI98738.1"/>
    <property type="status" value="ALT_INIT"/>
    <property type="molecule type" value="Genomic_DNA"/>
</dbReference>
<dbReference type="EMBL" id="DQ865976">
    <property type="protein sequence ID" value="ABI98739.1"/>
    <property type="molecule type" value="Genomic_DNA"/>
</dbReference>
<dbReference type="RefSeq" id="YP_247592.1">
    <property type="nucleotide sequence ID" value="NC_007144.1"/>
</dbReference>
<dbReference type="SMR" id="Q4VZP0"/>
<dbReference type="GeneID" id="3429363"/>
<dbReference type="KEGG" id="csv:3429363"/>
<dbReference type="GO" id="GO:0009535">
    <property type="term" value="C:chloroplast thylakoid membrane"/>
    <property type="evidence" value="ECO:0007669"/>
    <property type="project" value="UniProtKB-SubCell"/>
</dbReference>
<dbReference type="GO" id="GO:0009512">
    <property type="term" value="C:cytochrome b6f complex"/>
    <property type="evidence" value="ECO:0007669"/>
    <property type="project" value="InterPro"/>
</dbReference>
<dbReference type="GO" id="GO:0045158">
    <property type="term" value="F:electron transporter, transferring electrons within cytochrome b6/f complex of photosystem II activity"/>
    <property type="evidence" value="ECO:0007669"/>
    <property type="project" value="InterPro"/>
</dbReference>
<dbReference type="GO" id="GO:0017004">
    <property type="term" value="P:cytochrome complex assembly"/>
    <property type="evidence" value="ECO:0007669"/>
    <property type="project" value="UniProtKB-UniRule"/>
</dbReference>
<dbReference type="GO" id="GO:0015979">
    <property type="term" value="P:photosynthesis"/>
    <property type="evidence" value="ECO:0007669"/>
    <property type="project" value="UniProtKB-KW"/>
</dbReference>
<dbReference type="HAMAP" id="MF_00395">
    <property type="entry name" value="Cytb6_f_PetN"/>
    <property type="match status" value="1"/>
</dbReference>
<dbReference type="InterPro" id="IPR036143">
    <property type="entry name" value="Cytochr_b6-f_cplx_su8_sf"/>
</dbReference>
<dbReference type="InterPro" id="IPR005497">
    <property type="entry name" value="Cytochrome_b6-f_cplx_su8"/>
</dbReference>
<dbReference type="Pfam" id="PF03742">
    <property type="entry name" value="PetN"/>
    <property type="match status" value="1"/>
</dbReference>
<dbReference type="SUPFAM" id="SSF103451">
    <property type="entry name" value="PetN subunit of the cytochrome b6f complex"/>
    <property type="match status" value="1"/>
</dbReference>
<feature type="chain" id="PRO_0000275547" description="Cytochrome b6-f complex subunit 8">
    <location>
        <begin position="1"/>
        <end position="29"/>
    </location>
</feature>
<feature type="transmembrane region" description="Helical" evidence="1">
    <location>
        <begin position="3"/>
        <end position="23"/>
    </location>
</feature>
<accession>Q4VZP0</accession>
<accession>A5J1S7</accession>
<accession>A5J210</accession>
<keyword id="KW-0150">Chloroplast</keyword>
<keyword id="KW-0249">Electron transport</keyword>
<keyword id="KW-0472">Membrane</keyword>
<keyword id="KW-0602">Photosynthesis</keyword>
<keyword id="KW-0934">Plastid</keyword>
<keyword id="KW-0793">Thylakoid</keyword>
<keyword id="KW-0812">Transmembrane</keyword>
<keyword id="KW-1133">Transmembrane helix</keyword>
<keyword id="KW-0813">Transport</keyword>
<name>PETN_CUCSA</name>
<evidence type="ECO:0000255" key="1">
    <source>
        <dbReference type="HAMAP-Rule" id="MF_00395"/>
    </source>
</evidence>
<evidence type="ECO:0000305" key="2"/>
<proteinExistence type="inferred from homology"/>